<dbReference type="EMBL" id="AY261363">
    <property type="status" value="NOT_ANNOTATED_CDS"/>
    <property type="molecule type" value="Genomic_DNA"/>
</dbReference>
<dbReference type="SMR" id="P0C9B4"/>
<dbReference type="Proteomes" id="UP000000859">
    <property type="component" value="Segment"/>
</dbReference>
<dbReference type="GO" id="GO:0000428">
    <property type="term" value="C:DNA-directed RNA polymerase complex"/>
    <property type="evidence" value="ECO:0007669"/>
    <property type="project" value="UniProtKB-KW"/>
</dbReference>
<dbReference type="GO" id="GO:0030430">
    <property type="term" value="C:host cell cytoplasm"/>
    <property type="evidence" value="ECO:0007669"/>
    <property type="project" value="UniProtKB-SubCell"/>
</dbReference>
<dbReference type="GO" id="GO:0044423">
    <property type="term" value="C:virion component"/>
    <property type="evidence" value="ECO:0007669"/>
    <property type="project" value="UniProtKB-KW"/>
</dbReference>
<dbReference type="GO" id="GO:0003677">
    <property type="term" value="F:DNA binding"/>
    <property type="evidence" value="ECO:0007669"/>
    <property type="project" value="InterPro"/>
</dbReference>
<dbReference type="GO" id="GO:0003899">
    <property type="term" value="F:DNA-directed RNA polymerase activity"/>
    <property type="evidence" value="ECO:0007669"/>
    <property type="project" value="InterPro"/>
</dbReference>
<dbReference type="GO" id="GO:0006366">
    <property type="term" value="P:transcription by RNA polymerase II"/>
    <property type="evidence" value="ECO:0007669"/>
    <property type="project" value="TreeGrafter"/>
</dbReference>
<dbReference type="GO" id="GO:0006362">
    <property type="term" value="P:transcription elongation by RNA polymerase I"/>
    <property type="evidence" value="ECO:0007669"/>
    <property type="project" value="TreeGrafter"/>
</dbReference>
<dbReference type="GO" id="GO:0042797">
    <property type="term" value="P:tRNA transcription by RNA polymerase III"/>
    <property type="evidence" value="ECO:0007669"/>
    <property type="project" value="TreeGrafter"/>
</dbReference>
<dbReference type="GO" id="GO:0019083">
    <property type="term" value="P:viral transcription"/>
    <property type="evidence" value="ECO:0007669"/>
    <property type="project" value="UniProtKB-KW"/>
</dbReference>
<dbReference type="Gene3D" id="3.90.940.20">
    <property type="entry name" value="RPB5-like RNA polymerase subunit"/>
    <property type="match status" value="1"/>
</dbReference>
<dbReference type="InterPro" id="IPR014381">
    <property type="entry name" value="Arch_Rpo5/euc_Rpb5"/>
</dbReference>
<dbReference type="InterPro" id="IPR000783">
    <property type="entry name" value="RNA_pol_subH/Rpb5_C"/>
</dbReference>
<dbReference type="InterPro" id="IPR035913">
    <property type="entry name" value="RPB5-like_sf"/>
</dbReference>
<dbReference type="PANTHER" id="PTHR10535">
    <property type="entry name" value="DNA-DIRECTED RNA POLYMERASES I, II, AND III SUBUNIT RPABC1"/>
    <property type="match status" value="1"/>
</dbReference>
<dbReference type="PANTHER" id="PTHR10535:SF0">
    <property type="entry name" value="DNA-DIRECTED RNA POLYMERASES I, II, AND III SUBUNIT RPABC1"/>
    <property type="match status" value="1"/>
</dbReference>
<dbReference type="Pfam" id="PF01191">
    <property type="entry name" value="RNA_pol_Rpb5_C"/>
    <property type="match status" value="1"/>
</dbReference>
<dbReference type="SUPFAM" id="SSF55287">
    <property type="entry name" value="RPB5-like RNA polymerase subunit"/>
    <property type="match status" value="1"/>
</dbReference>
<name>RPB5_ASFP4</name>
<feature type="chain" id="PRO_0000373123" description="DNA-directed RNA polymerase RPB5 homolog">
    <location>
        <begin position="1"/>
        <end position="205"/>
    </location>
</feature>
<gene>
    <name type="ordered locus">Pret-120</name>
</gene>
<organismHost>
    <name type="scientific">Ornithodoros</name>
    <name type="common">relapsing fever ticks</name>
    <dbReference type="NCBI Taxonomy" id="6937"/>
</organismHost>
<organismHost>
    <name type="scientific">Phacochoerus aethiopicus</name>
    <name type="common">Warthog</name>
    <dbReference type="NCBI Taxonomy" id="85517"/>
</organismHost>
<organismHost>
    <name type="scientific">Phacochoerus africanus</name>
    <name type="common">Warthog</name>
    <dbReference type="NCBI Taxonomy" id="41426"/>
</organismHost>
<organismHost>
    <name type="scientific">Potamochoerus larvatus</name>
    <name type="common">Bushpig</name>
    <dbReference type="NCBI Taxonomy" id="273792"/>
</organismHost>
<organismHost>
    <name type="scientific">Sus scrofa</name>
    <name type="common">Pig</name>
    <dbReference type="NCBI Taxonomy" id="9823"/>
</organismHost>
<accession>P0C9B4</accession>
<proteinExistence type="inferred from homology"/>
<evidence type="ECO:0000250" key="1">
    <source>
        <dbReference type="UniProtKB" id="P19388"/>
    </source>
</evidence>
<evidence type="ECO:0000250" key="2">
    <source>
        <dbReference type="UniProtKB" id="Q65181"/>
    </source>
</evidence>
<evidence type="ECO:0000305" key="3"/>
<protein>
    <recommendedName>
        <fullName evidence="2">DNA-directed RNA polymerase RPB5 homolog</fullName>
        <shortName evidence="3">RPB5 homolog</shortName>
    </recommendedName>
</protein>
<sequence>MAMQKLFTYIYEFIKYRKMVLLEEKVPYDKFVQMVLNTGFFRINAETLNHGIVSVFIFGANGKYVHHGGDMRTLLTNTLNEKKHYEELILIVDKPVLSKKNILDIIVEQRAANPTIVINIYPYHLFCINIPKVSAIPRHKLITQEEAQEFLGREYLQPQDLMQISASDPPVVWLGGRPGDFVQIERPSETAMHAVVIRFITKSKI</sequence>
<reference key="1">
    <citation type="submission" date="2003-03" db="EMBL/GenBank/DDBJ databases">
        <title>African swine fever virus genomes.</title>
        <authorList>
            <person name="Kutish G.F."/>
            <person name="Rock D.L."/>
        </authorList>
    </citation>
    <scope>NUCLEOTIDE SEQUENCE [GENOMIC DNA]</scope>
</reference>
<keyword id="KW-0240">DNA-directed RNA polymerase</keyword>
<keyword id="KW-1035">Host cytoplasm</keyword>
<keyword id="KW-0804">Transcription</keyword>
<keyword id="KW-1195">Viral transcription</keyword>
<keyword id="KW-0946">Virion</keyword>
<organism>
    <name type="scientific">African swine fever virus (isolate Tick/South Africa/Pretoriuskop Pr4/1996)</name>
    <name type="common">ASFV</name>
    <dbReference type="NCBI Taxonomy" id="561443"/>
    <lineage>
        <taxon>Viruses</taxon>
        <taxon>Varidnaviria</taxon>
        <taxon>Bamfordvirae</taxon>
        <taxon>Nucleocytoviricota</taxon>
        <taxon>Pokkesviricetes</taxon>
        <taxon>Asfuvirales</taxon>
        <taxon>Asfarviridae</taxon>
        <taxon>Asfivirus</taxon>
        <taxon>African swine fever virus</taxon>
    </lineage>
</organism>
<comment type="function">
    <text evidence="1">Component of the DNA-directed RNA polymerase (RNAP) that catalyzes the transcription in the cytoplasm of viral DNA into RNA using the four ribonucleoside triphosphates as substrates.</text>
</comment>
<comment type="subunit">
    <text evidence="2">Part of the viral DNA-directed RNA polymerase that consists of 8 polII-like subunits (RPB1, RPB2, RPB3, RPB5, RPB6, RPB7, RPB9, RPB10), a capping enzyme and a termination factor.</text>
</comment>
<comment type="subcellular location">
    <subcellularLocation>
        <location evidence="3">Host cytoplasm</location>
    </subcellularLocation>
    <subcellularLocation>
        <location evidence="2">Virion</location>
    </subcellularLocation>
    <text evidence="2">Found in association with viral nucleoid.</text>
</comment>
<comment type="similarity">
    <text evidence="3">Belongs to the archaeal RpoH/eukaryotic RPB5 RNA polymerase subunit family.</text>
</comment>